<name>LAP2_ASPOR</name>
<proteinExistence type="evidence at protein level"/>
<keyword id="KW-0031">Aminopeptidase</keyword>
<keyword id="KW-0903">Direct protein sequencing</keyword>
<keyword id="KW-0325">Glycoprotein</keyword>
<keyword id="KW-0378">Hydrolase</keyword>
<keyword id="KW-0479">Metal-binding</keyword>
<keyword id="KW-0482">Metalloprotease</keyword>
<keyword id="KW-0645">Protease</keyword>
<keyword id="KW-1185">Reference proteome</keyword>
<keyword id="KW-0964">Secreted</keyword>
<keyword id="KW-0732">Signal</keyword>
<keyword id="KW-0862">Zinc</keyword>
<feature type="signal peptide" evidence="5">
    <location>
        <begin position="1"/>
        <end position="16"/>
    </location>
</feature>
<feature type="chain" id="PRO_0000397769" description="probable leucine aminopeptidase 2">
    <location>
        <begin position="17"/>
        <end position="496"/>
    </location>
</feature>
<feature type="domain" description="PA">
    <location>
        <begin position="111"/>
        <end position="205"/>
    </location>
</feature>
<feature type="region of interest" description="Disordered" evidence="4">
    <location>
        <begin position="475"/>
        <end position="496"/>
    </location>
</feature>
<feature type="active site" description="Proton acceptor" evidence="2">
    <location>
        <position position="292"/>
    </location>
</feature>
<feature type="binding site" evidence="2">
    <location>
        <position position="248"/>
    </location>
    <ligand>
        <name>Zn(2+)</name>
        <dbReference type="ChEBI" id="CHEBI:29105"/>
        <label>1</label>
        <note>catalytic</note>
    </ligand>
</feature>
<feature type="binding site" evidence="2">
    <location>
        <position position="260"/>
    </location>
    <ligand>
        <name>Zn(2+)</name>
        <dbReference type="ChEBI" id="CHEBI:29105"/>
        <label>1</label>
        <note>catalytic</note>
    </ligand>
</feature>
<feature type="binding site" evidence="2">
    <location>
        <position position="260"/>
    </location>
    <ligand>
        <name>Zn(2+)</name>
        <dbReference type="ChEBI" id="CHEBI:29105"/>
        <label>2</label>
        <note>catalytic</note>
    </ligand>
</feature>
<feature type="binding site" evidence="2">
    <location>
        <position position="293"/>
    </location>
    <ligand>
        <name>Zn(2+)</name>
        <dbReference type="ChEBI" id="CHEBI:29105"/>
        <label>2</label>
        <note>catalytic</note>
    </ligand>
</feature>
<feature type="binding site" evidence="2">
    <location>
        <position position="321"/>
    </location>
    <ligand>
        <name>Zn(2+)</name>
        <dbReference type="ChEBI" id="CHEBI:29105"/>
        <label>1</label>
        <note>catalytic</note>
    </ligand>
</feature>
<feature type="binding site" evidence="2">
    <location>
        <position position="419"/>
    </location>
    <ligand>
        <name>Zn(2+)</name>
        <dbReference type="ChEBI" id="CHEBI:29105"/>
        <label>2</label>
        <note>catalytic</note>
    </ligand>
</feature>
<feature type="site" description="Transition state stabilizer" evidence="2">
    <location>
        <position position="418"/>
    </location>
</feature>
<feature type="glycosylation site" description="N-linked (GlcNAc...) asparagine" evidence="3">
    <location>
        <position position="224"/>
    </location>
</feature>
<feature type="glycosylation site" description="N-linked (GlcNAc...) asparagine" evidence="3">
    <location>
        <position position="307"/>
    </location>
</feature>
<feature type="glycosylation site" description="N-linked (GlcNAc...) asparagine" evidence="3">
    <location>
        <position position="341"/>
    </location>
</feature>
<feature type="glycosylation site" description="N-linked (GlcNAc...) asparagine" evidence="3">
    <location>
        <position position="402"/>
    </location>
</feature>
<feature type="glycosylation site" description="N-linked (GlcNAc...) asparagine" evidence="3">
    <location>
        <position position="424"/>
    </location>
</feature>
<feature type="glycosylation site" description="N-linked (GlcNAc...) asparagine" evidence="3">
    <location>
        <position position="458"/>
    </location>
</feature>
<protein>
    <recommendedName>
        <fullName>probable leucine aminopeptidase 2</fullName>
        <ecNumber>3.4.11.-</ecNumber>
    </recommendedName>
    <alternativeName>
        <fullName>Aminopeptidase II</fullName>
    </alternativeName>
    <alternativeName>
        <fullName>Leucyl aminopeptidase 2</fullName>
        <shortName>LAP2</shortName>
    </alternativeName>
</protein>
<comment type="function">
    <text evidence="5">Extracellular aminopeptidase that releases a wide variety of amino acids from natural peptides.</text>
</comment>
<comment type="cofactor">
    <cofactor evidence="5">
        <name>Zn(2+)</name>
        <dbReference type="ChEBI" id="CHEBI:29105"/>
    </cofactor>
    <text evidence="5">Binds 2 Zn(2+) ions per subunit.</text>
</comment>
<comment type="biophysicochemical properties">
    <kinetics>
        <KM evidence="5">7 mM for Leu-paranitroanilide</KM>
        <KM evidence="5">9 mM for Lys-paranitroanilide</KM>
        <KM evidence="5">3.5 mM for Ala-paranitroanilide</KM>
        <KM evidence="5">1.5 mM for Glu-paranitroanilide</KM>
        <KM evidence="5">13 mM for Val-paranitroanilide</KM>
        <KM evidence="5">15 mM for Pro-paranitroanilide</KM>
        <KM evidence="5">51 mM for Ile-paranitroanilide</KM>
    </kinetics>
    <phDependence>
        <text evidence="5">Optimum pH is 9.5.</text>
    </phDependence>
    <temperatureDependence>
        <text evidence="5">Optimum temperature is 55 degrees Celsius. Retains 65 and 46 percent residual activity after a 20 minutes incubation at 70 and 75 degrees Celsius, respectively.</text>
    </temperatureDependence>
</comment>
<comment type="subunit">
    <text evidence="1">Monomer.</text>
</comment>
<comment type="subcellular location">
    <subcellularLocation>
        <location evidence="5">Secreted</location>
    </subcellularLocation>
</comment>
<comment type="similarity">
    <text evidence="6">Belongs to the peptidase M28 family. M28A subfamily.</text>
</comment>
<evidence type="ECO:0000250" key="1"/>
<evidence type="ECO:0000250" key="2">
    <source>
        <dbReference type="UniProtKB" id="P80561"/>
    </source>
</evidence>
<evidence type="ECO:0000255" key="3"/>
<evidence type="ECO:0000256" key="4">
    <source>
        <dbReference type="SAM" id="MobiDB-lite"/>
    </source>
</evidence>
<evidence type="ECO:0000269" key="5">
    <source>
    </source>
</evidence>
<evidence type="ECO:0000305" key="6"/>
<sequence length="496" mass="53557">MRSLLWASLLSGVLAGRALVSPDEFPEDIQLEDLLEGSQQLEDFAYAYPERNRVFGGKAHDDTVNYLYEELKKTGYYDVYKQPQVHLWSNADQTLKVGDEEIEAKTMTYSPSVEVTADVAVVKNLGCSEADYPSDVEGKVALIKRGECPFGDKSVLAAKAKAAASIVYNNVAGSMAGTLGAAQSDKGPYSAIVGISLEDGQKLIKLAEAGSVSVDLWVDSKQENRTTYNVVAQTKGGDPNNVVALGGHTDSVEAGPGINDDGSGIISNLVIAKALTQYSVKNAVRFLFWTAEEFGLLGSNYYVSHLNATELNKIRLYLNFDMIASPNYALMIYDGDGSAFNQSGPAGSAQIEKLFEDYYDSIDLPHIPTQFDGRSDYEAFILNGIPSGGLFTGAEGIMSEENASRWGGQAGVAYDANYHAAGDNMTNLNHEAFLINSKATAFAVATYANDLSSIPKRNTTSSLHRRARTMRPFGKRAPKTHAHVSGSGCWHSQVEA</sequence>
<dbReference type="EC" id="3.4.11.-"/>
<dbReference type="EMBL" id="BA000050">
    <property type="protein sequence ID" value="BAE57543.1"/>
    <property type="molecule type" value="Genomic_DNA"/>
</dbReference>
<dbReference type="RefSeq" id="XP_001819545.1">
    <property type="nucleotide sequence ID" value="XM_001819493.2"/>
</dbReference>
<dbReference type="SMR" id="Q2ULM2"/>
<dbReference type="STRING" id="510516.Q2ULM2"/>
<dbReference type="GlyCosmos" id="Q2ULM2">
    <property type="glycosylation" value="6 sites, No reported glycans"/>
</dbReference>
<dbReference type="EnsemblFungi" id="BAE57543">
    <property type="protein sequence ID" value="BAE57543"/>
    <property type="gene ID" value="AO090003000354"/>
</dbReference>
<dbReference type="GeneID" id="5991528"/>
<dbReference type="KEGG" id="aor:AO090003000354"/>
<dbReference type="VEuPathDB" id="FungiDB:AO090003000354"/>
<dbReference type="HOGENOM" id="CLU_024336_0_1_1"/>
<dbReference type="OMA" id="VDYIYNE"/>
<dbReference type="OrthoDB" id="90093at5052"/>
<dbReference type="SABIO-RK" id="Q2ULM2"/>
<dbReference type="Proteomes" id="UP000006564">
    <property type="component" value="Chromosome 2"/>
</dbReference>
<dbReference type="GO" id="GO:0005576">
    <property type="term" value="C:extracellular region"/>
    <property type="evidence" value="ECO:0007669"/>
    <property type="project" value="UniProtKB-SubCell"/>
</dbReference>
<dbReference type="GO" id="GO:0004177">
    <property type="term" value="F:aminopeptidase activity"/>
    <property type="evidence" value="ECO:0007669"/>
    <property type="project" value="UniProtKB-KW"/>
</dbReference>
<dbReference type="GO" id="GO:0046872">
    <property type="term" value="F:metal ion binding"/>
    <property type="evidence" value="ECO:0007669"/>
    <property type="project" value="UniProtKB-KW"/>
</dbReference>
<dbReference type="GO" id="GO:0008235">
    <property type="term" value="F:metalloexopeptidase activity"/>
    <property type="evidence" value="ECO:0007669"/>
    <property type="project" value="InterPro"/>
</dbReference>
<dbReference type="GO" id="GO:0006508">
    <property type="term" value="P:proteolysis"/>
    <property type="evidence" value="ECO:0007669"/>
    <property type="project" value="UniProtKB-KW"/>
</dbReference>
<dbReference type="CDD" id="cd03876">
    <property type="entry name" value="M28_SGAP_like"/>
    <property type="match status" value="1"/>
</dbReference>
<dbReference type="CDD" id="cd02130">
    <property type="entry name" value="PA_ScAPY_like"/>
    <property type="match status" value="1"/>
</dbReference>
<dbReference type="FunFam" id="3.40.630.10:FF:000054">
    <property type="entry name" value="Peptide hydrolase"/>
    <property type="match status" value="1"/>
</dbReference>
<dbReference type="FunFam" id="3.50.30.30:FF:000030">
    <property type="entry name" value="Peptide hydrolase"/>
    <property type="match status" value="1"/>
</dbReference>
<dbReference type="Gene3D" id="3.50.30.30">
    <property type="match status" value="1"/>
</dbReference>
<dbReference type="Gene3D" id="3.40.630.10">
    <property type="entry name" value="Zn peptidases"/>
    <property type="match status" value="1"/>
</dbReference>
<dbReference type="InterPro" id="IPR045175">
    <property type="entry name" value="M28_fam"/>
</dbReference>
<dbReference type="InterPro" id="IPR041756">
    <property type="entry name" value="M28_SGAP-like"/>
</dbReference>
<dbReference type="InterPro" id="IPR046450">
    <property type="entry name" value="PA_dom_sf"/>
</dbReference>
<dbReference type="InterPro" id="IPR003137">
    <property type="entry name" value="PA_domain"/>
</dbReference>
<dbReference type="InterPro" id="IPR007484">
    <property type="entry name" value="Peptidase_M28"/>
</dbReference>
<dbReference type="PANTHER" id="PTHR12147">
    <property type="entry name" value="METALLOPEPTIDASE M28 FAMILY MEMBER"/>
    <property type="match status" value="1"/>
</dbReference>
<dbReference type="PANTHER" id="PTHR12147:SF57">
    <property type="entry name" value="PEPTIDE HYDROLASE"/>
    <property type="match status" value="1"/>
</dbReference>
<dbReference type="Pfam" id="PF02225">
    <property type="entry name" value="PA"/>
    <property type="match status" value="1"/>
</dbReference>
<dbReference type="Pfam" id="PF04389">
    <property type="entry name" value="Peptidase_M28"/>
    <property type="match status" value="1"/>
</dbReference>
<dbReference type="SUPFAM" id="SSF52025">
    <property type="entry name" value="PA domain"/>
    <property type="match status" value="1"/>
</dbReference>
<dbReference type="SUPFAM" id="SSF53187">
    <property type="entry name" value="Zn-dependent exopeptidases"/>
    <property type="match status" value="1"/>
</dbReference>
<organism>
    <name type="scientific">Aspergillus oryzae (strain ATCC 42149 / RIB 40)</name>
    <name type="common">Yellow koji mold</name>
    <dbReference type="NCBI Taxonomy" id="510516"/>
    <lineage>
        <taxon>Eukaryota</taxon>
        <taxon>Fungi</taxon>
        <taxon>Dikarya</taxon>
        <taxon>Ascomycota</taxon>
        <taxon>Pezizomycotina</taxon>
        <taxon>Eurotiomycetes</taxon>
        <taxon>Eurotiomycetidae</taxon>
        <taxon>Eurotiales</taxon>
        <taxon>Aspergillaceae</taxon>
        <taxon>Aspergillus</taxon>
        <taxon>Aspergillus subgen. Circumdati</taxon>
    </lineage>
</organism>
<reference key="1">
    <citation type="journal article" date="2005" name="Nature">
        <title>Genome sequencing and analysis of Aspergillus oryzae.</title>
        <authorList>
            <person name="Machida M."/>
            <person name="Asai K."/>
            <person name="Sano M."/>
            <person name="Tanaka T."/>
            <person name="Kumagai T."/>
            <person name="Terai G."/>
            <person name="Kusumoto K."/>
            <person name="Arima T."/>
            <person name="Akita O."/>
            <person name="Kashiwagi Y."/>
            <person name="Abe K."/>
            <person name="Gomi K."/>
            <person name="Horiuchi H."/>
            <person name="Kitamoto K."/>
            <person name="Kobayashi T."/>
            <person name="Takeuchi M."/>
            <person name="Denning D.W."/>
            <person name="Galagan J.E."/>
            <person name="Nierman W.C."/>
            <person name="Yu J."/>
            <person name="Archer D.B."/>
            <person name="Bennett J.W."/>
            <person name="Bhatnagar D."/>
            <person name="Cleveland T.E."/>
            <person name="Fedorova N.D."/>
            <person name="Gotoh O."/>
            <person name="Horikawa H."/>
            <person name="Hosoyama A."/>
            <person name="Ichinomiya M."/>
            <person name="Igarashi R."/>
            <person name="Iwashita K."/>
            <person name="Juvvadi P.R."/>
            <person name="Kato M."/>
            <person name="Kato Y."/>
            <person name="Kin T."/>
            <person name="Kokubun A."/>
            <person name="Maeda H."/>
            <person name="Maeyama N."/>
            <person name="Maruyama J."/>
            <person name="Nagasaki H."/>
            <person name="Nakajima T."/>
            <person name="Oda K."/>
            <person name="Okada K."/>
            <person name="Paulsen I."/>
            <person name="Sakamoto K."/>
            <person name="Sawano T."/>
            <person name="Takahashi M."/>
            <person name="Takase K."/>
            <person name="Terabayashi Y."/>
            <person name="Wortman J.R."/>
            <person name="Yamada O."/>
            <person name="Yamagata Y."/>
            <person name="Anazawa H."/>
            <person name="Hata Y."/>
            <person name="Koide Y."/>
            <person name="Komori T."/>
            <person name="Koyama Y."/>
            <person name="Minetoki T."/>
            <person name="Suharnan S."/>
            <person name="Tanaka A."/>
            <person name="Isono K."/>
            <person name="Kuhara S."/>
            <person name="Ogasawara N."/>
            <person name="Kikuchi H."/>
        </authorList>
    </citation>
    <scope>NUCLEOTIDE SEQUENCE [LARGE SCALE GENOMIC DNA]</scope>
    <source>
        <strain>ATCC 42149 / RIB 40</strain>
    </source>
</reference>
<reference key="2">
    <citation type="journal article" date="2000" name="Biochim. Biophys. Acta">
        <title>A non-specific aminopeptidase from Aspergillus.</title>
        <authorList>
            <person name="Blinkovsky A.M."/>
            <person name="Byun T."/>
            <person name="Brown K.M."/>
            <person name="Golightly E.J."/>
            <person name="Klotz A.V."/>
        </authorList>
    </citation>
    <scope>PROTEIN SEQUENCE OF 17-46; 108-142 AND 176-195</scope>
    <scope>SUBCELLULAR LOCATION</scope>
    <scope>GLYCOSYLATION</scope>
    <scope>COFACTOR</scope>
    <scope>FUNCTION</scope>
    <scope>BIOPHYSICOCHEMICAL PROPERTIES</scope>
</reference>
<accession>Q2ULM2</accession>
<gene>
    <name type="primary">lap2</name>
    <name type="ORF">AO090003000354</name>
</gene>